<accession>Q04GN6</accession>
<gene>
    <name evidence="1" type="primary">ligA</name>
    <name type="ordered locus">OEOE_0427</name>
</gene>
<keyword id="KW-0227">DNA damage</keyword>
<keyword id="KW-0234">DNA repair</keyword>
<keyword id="KW-0235">DNA replication</keyword>
<keyword id="KW-0436">Ligase</keyword>
<keyword id="KW-0460">Magnesium</keyword>
<keyword id="KW-0464">Manganese</keyword>
<keyword id="KW-0479">Metal-binding</keyword>
<keyword id="KW-0520">NAD</keyword>
<keyword id="KW-1185">Reference proteome</keyword>
<keyword id="KW-0862">Zinc</keyword>
<sequence>MNPADQFTPIEDLTFTQAQAEIRDLSDELTKWGREYYEEDNPSVEDYVYDAHYARLVALEKAYPSLAMPDSPTQHVAAGNQTKNDSRGLQKVVHPVPMLSLGDVFSIQELLDWDLVTTKNAGSQQKYNLELKIDGLAISLRYENGRLIQASTRGDGSIGENVTDNVKTITEIPKVLNEPLTIEVRGEIYMRKEAFADLNQQRDEEGKTIFANPRNAAAGSLRQLDPKITAKRHLSSFIYYTAQNDVLGVNTQSDVLERFRQLGFPVNSSNKVIDRMTEVKDYIDEYTIKRDNLPYGIDGVVVKVNDLDVENELGNTVKIPRWSIAYKFPPEEALTVVRDITWTVGRTGVVTPTAIMDPVFLAGTKVKRASLHNPDYLQEKDVRIGDTVTLHKAGDIIPEVGQVILKKRPADAQAYPIPVYCPSCKSKLVHVQGEVALRCINPECPAQIKEGLIHFASRNAMNIDGLGPRVVEQLLSKNLIRKISDLYALTESQLTTLDKFADLSSKNLIQAIDRSRQNSVERLITALGIRGVGAKAAKVLAAHFKNLRNLQNAGAEEIAEIDGVGQVMADAIRQYFNSESVASLINELENFQVNFDYLTTSTVDEKNYFFNKRIVLTGKLIHWTRPQMQAWLEEHGANVSSSVSSKTDLLIAGSDVGSKLERANKLGIKVINEQDFINLSNAKK</sequence>
<evidence type="ECO:0000255" key="1">
    <source>
        <dbReference type="HAMAP-Rule" id="MF_01588"/>
    </source>
</evidence>
<organism>
    <name type="scientific">Oenococcus oeni (strain ATCC BAA-331 / PSU-1)</name>
    <dbReference type="NCBI Taxonomy" id="203123"/>
    <lineage>
        <taxon>Bacteria</taxon>
        <taxon>Bacillati</taxon>
        <taxon>Bacillota</taxon>
        <taxon>Bacilli</taxon>
        <taxon>Lactobacillales</taxon>
        <taxon>Lactobacillaceae</taxon>
        <taxon>Oenococcus</taxon>
    </lineage>
</organism>
<reference key="1">
    <citation type="journal article" date="2006" name="Proc. Natl. Acad. Sci. U.S.A.">
        <title>Comparative genomics of the lactic acid bacteria.</title>
        <authorList>
            <person name="Makarova K.S."/>
            <person name="Slesarev A."/>
            <person name="Wolf Y.I."/>
            <person name="Sorokin A."/>
            <person name="Mirkin B."/>
            <person name="Koonin E.V."/>
            <person name="Pavlov A."/>
            <person name="Pavlova N."/>
            <person name="Karamychev V."/>
            <person name="Polouchine N."/>
            <person name="Shakhova V."/>
            <person name="Grigoriev I."/>
            <person name="Lou Y."/>
            <person name="Rohksar D."/>
            <person name="Lucas S."/>
            <person name="Huang K."/>
            <person name="Goodstein D.M."/>
            <person name="Hawkins T."/>
            <person name="Plengvidhya V."/>
            <person name="Welker D."/>
            <person name="Hughes J."/>
            <person name="Goh Y."/>
            <person name="Benson A."/>
            <person name="Baldwin K."/>
            <person name="Lee J.-H."/>
            <person name="Diaz-Muniz I."/>
            <person name="Dosti B."/>
            <person name="Smeianov V."/>
            <person name="Wechter W."/>
            <person name="Barabote R."/>
            <person name="Lorca G."/>
            <person name="Altermann E."/>
            <person name="Barrangou R."/>
            <person name="Ganesan B."/>
            <person name="Xie Y."/>
            <person name="Rawsthorne H."/>
            <person name="Tamir D."/>
            <person name="Parker C."/>
            <person name="Breidt F."/>
            <person name="Broadbent J.R."/>
            <person name="Hutkins R."/>
            <person name="O'Sullivan D."/>
            <person name="Steele J."/>
            <person name="Unlu G."/>
            <person name="Saier M.H. Jr."/>
            <person name="Klaenhammer T."/>
            <person name="Richardson P."/>
            <person name="Kozyavkin S."/>
            <person name="Weimer B.C."/>
            <person name="Mills D.A."/>
        </authorList>
    </citation>
    <scope>NUCLEOTIDE SEQUENCE [LARGE SCALE GENOMIC DNA]</scope>
    <source>
        <strain>ATCC BAA-331 / PSU-1</strain>
    </source>
</reference>
<name>DNLJ_OENOB</name>
<feature type="chain" id="PRO_0000313348" description="DNA ligase">
    <location>
        <begin position="1"/>
        <end position="684"/>
    </location>
</feature>
<feature type="domain" description="BRCT" evidence="1">
    <location>
        <begin position="604"/>
        <end position="684"/>
    </location>
</feature>
<feature type="active site" description="N6-AMP-lysine intermediate" evidence="1">
    <location>
        <position position="132"/>
    </location>
</feature>
<feature type="binding site" evidence="1">
    <location>
        <begin position="46"/>
        <end position="50"/>
    </location>
    <ligand>
        <name>NAD(+)</name>
        <dbReference type="ChEBI" id="CHEBI:57540"/>
    </ligand>
</feature>
<feature type="binding site" evidence="1">
    <location>
        <begin position="100"/>
        <end position="101"/>
    </location>
    <ligand>
        <name>NAD(+)</name>
        <dbReference type="ChEBI" id="CHEBI:57540"/>
    </ligand>
</feature>
<feature type="binding site" evidence="1">
    <location>
        <position position="130"/>
    </location>
    <ligand>
        <name>NAD(+)</name>
        <dbReference type="ChEBI" id="CHEBI:57540"/>
    </ligand>
</feature>
<feature type="binding site" evidence="1">
    <location>
        <position position="153"/>
    </location>
    <ligand>
        <name>NAD(+)</name>
        <dbReference type="ChEBI" id="CHEBI:57540"/>
    </ligand>
</feature>
<feature type="binding site" evidence="1">
    <location>
        <position position="187"/>
    </location>
    <ligand>
        <name>NAD(+)</name>
        <dbReference type="ChEBI" id="CHEBI:57540"/>
    </ligand>
</feature>
<feature type="binding site" evidence="1">
    <location>
        <position position="303"/>
    </location>
    <ligand>
        <name>NAD(+)</name>
        <dbReference type="ChEBI" id="CHEBI:57540"/>
    </ligand>
</feature>
<feature type="binding site" evidence="1">
    <location>
        <position position="327"/>
    </location>
    <ligand>
        <name>NAD(+)</name>
        <dbReference type="ChEBI" id="CHEBI:57540"/>
    </ligand>
</feature>
<feature type="binding site" evidence="1">
    <location>
        <position position="421"/>
    </location>
    <ligand>
        <name>Zn(2+)</name>
        <dbReference type="ChEBI" id="CHEBI:29105"/>
    </ligand>
</feature>
<feature type="binding site" evidence="1">
    <location>
        <position position="424"/>
    </location>
    <ligand>
        <name>Zn(2+)</name>
        <dbReference type="ChEBI" id="CHEBI:29105"/>
    </ligand>
</feature>
<feature type="binding site" evidence="1">
    <location>
        <position position="439"/>
    </location>
    <ligand>
        <name>Zn(2+)</name>
        <dbReference type="ChEBI" id="CHEBI:29105"/>
    </ligand>
</feature>
<feature type="binding site" evidence="1">
    <location>
        <position position="444"/>
    </location>
    <ligand>
        <name>Zn(2+)</name>
        <dbReference type="ChEBI" id="CHEBI:29105"/>
    </ligand>
</feature>
<comment type="function">
    <text evidence="1">DNA ligase that catalyzes the formation of phosphodiester linkages between 5'-phosphoryl and 3'-hydroxyl groups in double-stranded DNA using NAD as a coenzyme and as the energy source for the reaction. It is essential for DNA replication and repair of damaged DNA.</text>
</comment>
<comment type="catalytic activity">
    <reaction evidence="1">
        <text>NAD(+) + (deoxyribonucleotide)n-3'-hydroxyl + 5'-phospho-(deoxyribonucleotide)m = (deoxyribonucleotide)n+m + AMP + beta-nicotinamide D-nucleotide.</text>
        <dbReference type="EC" id="6.5.1.2"/>
    </reaction>
</comment>
<comment type="cofactor">
    <cofactor evidence="1">
        <name>Mg(2+)</name>
        <dbReference type="ChEBI" id="CHEBI:18420"/>
    </cofactor>
    <cofactor evidence="1">
        <name>Mn(2+)</name>
        <dbReference type="ChEBI" id="CHEBI:29035"/>
    </cofactor>
</comment>
<comment type="similarity">
    <text evidence="1">Belongs to the NAD-dependent DNA ligase family. LigA subfamily.</text>
</comment>
<protein>
    <recommendedName>
        <fullName evidence="1">DNA ligase</fullName>
        <ecNumber evidence="1">6.5.1.2</ecNumber>
    </recommendedName>
    <alternativeName>
        <fullName evidence="1">Polydeoxyribonucleotide synthase [NAD(+)]</fullName>
    </alternativeName>
</protein>
<dbReference type="EC" id="6.5.1.2" evidence="1"/>
<dbReference type="EMBL" id="CP000411">
    <property type="protein sequence ID" value="ABJ56386.1"/>
    <property type="molecule type" value="Genomic_DNA"/>
</dbReference>
<dbReference type="RefSeq" id="WP_011677459.1">
    <property type="nucleotide sequence ID" value="NC_008528.1"/>
</dbReference>
<dbReference type="SMR" id="Q04GN6"/>
<dbReference type="STRING" id="203123.OEOE_0427"/>
<dbReference type="KEGG" id="ooe:OEOE_0427"/>
<dbReference type="PATRIC" id="fig|203123.7.peg.440"/>
<dbReference type="eggNOG" id="COG0272">
    <property type="taxonomic scope" value="Bacteria"/>
</dbReference>
<dbReference type="HOGENOM" id="CLU_007764_2_1_9"/>
<dbReference type="Proteomes" id="UP000000774">
    <property type="component" value="Chromosome"/>
</dbReference>
<dbReference type="GO" id="GO:0005829">
    <property type="term" value="C:cytosol"/>
    <property type="evidence" value="ECO:0007669"/>
    <property type="project" value="TreeGrafter"/>
</dbReference>
<dbReference type="GO" id="GO:0003677">
    <property type="term" value="F:DNA binding"/>
    <property type="evidence" value="ECO:0007669"/>
    <property type="project" value="InterPro"/>
</dbReference>
<dbReference type="GO" id="GO:0003911">
    <property type="term" value="F:DNA ligase (NAD+) activity"/>
    <property type="evidence" value="ECO:0007669"/>
    <property type="project" value="UniProtKB-UniRule"/>
</dbReference>
<dbReference type="GO" id="GO:0046872">
    <property type="term" value="F:metal ion binding"/>
    <property type="evidence" value="ECO:0007669"/>
    <property type="project" value="UniProtKB-KW"/>
</dbReference>
<dbReference type="GO" id="GO:0006281">
    <property type="term" value="P:DNA repair"/>
    <property type="evidence" value="ECO:0007669"/>
    <property type="project" value="UniProtKB-KW"/>
</dbReference>
<dbReference type="GO" id="GO:0006260">
    <property type="term" value="P:DNA replication"/>
    <property type="evidence" value="ECO:0007669"/>
    <property type="project" value="UniProtKB-KW"/>
</dbReference>
<dbReference type="CDD" id="cd17748">
    <property type="entry name" value="BRCT_DNA_ligase_like"/>
    <property type="match status" value="1"/>
</dbReference>
<dbReference type="CDD" id="cd00114">
    <property type="entry name" value="LIGANc"/>
    <property type="match status" value="1"/>
</dbReference>
<dbReference type="FunFam" id="1.10.150.20:FF:000006">
    <property type="entry name" value="DNA ligase"/>
    <property type="match status" value="1"/>
</dbReference>
<dbReference type="FunFam" id="1.10.150.20:FF:000007">
    <property type="entry name" value="DNA ligase"/>
    <property type="match status" value="1"/>
</dbReference>
<dbReference type="FunFam" id="2.40.50.140:FF:000012">
    <property type="entry name" value="DNA ligase"/>
    <property type="match status" value="1"/>
</dbReference>
<dbReference type="FunFam" id="3.30.470.30:FF:000001">
    <property type="entry name" value="DNA ligase"/>
    <property type="match status" value="1"/>
</dbReference>
<dbReference type="Gene3D" id="6.20.10.30">
    <property type="match status" value="1"/>
</dbReference>
<dbReference type="Gene3D" id="1.10.150.20">
    <property type="entry name" value="5' to 3' exonuclease, C-terminal subdomain"/>
    <property type="match status" value="2"/>
</dbReference>
<dbReference type="Gene3D" id="3.40.50.10190">
    <property type="entry name" value="BRCT domain"/>
    <property type="match status" value="1"/>
</dbReference>
<dbReference type="Gene3D" id="3.30.470.30">
    <property type="entry name" value="DNA ligase/mRNA capping enzyme"/>
    <property type="match status" value="1"/>
</dbReference>
<dbReference type="Gene3D" id="1.10.287.610">
    <property type="entry name" value="Helix hairpin bin"/>
    <property type="match status" value="1"/>
</dbReference>
<dbReference type="Gene3D" id="2.40.50.140">
    <property type="entry name" value="Nucleic acid-binding proteins"/>
    <property type="match status" value="1"/>
</dbReference>
<dbReference type="HAMAP" id="MF_01588">
    <property type="entry name" value="DNA_ligase_A"/>
    <property type="match status" value="1"/>
</dbReference>
<dbReference type="InterPro" id="IPR001357">
    <property type="entry name" value="BRCT_dom"/>
</dbReference>
<dbReference type="InterPro" id="IPR036420">
    <property type="entry name" value="BRCT_dom_sf"/>
</dbReference>
<dbReference type="InterPro" id="IPR041663">
    <property type="entry name" value="DisA/LigA_HHH"/>
</dbReference>
<dbReference type="InterPro" id="IPR001679">
    <property type="entry name" value="DNA_ligase"/>
</dbReference>
<dbReference type="InterPro" id="IPR018239">
    <property type="entry name" value="DNA_ligase_AS"/>
</dbReference>
<dbReference type="InterPro" id="IPR033136">
    <property type="entry name" value="DNA_ligase_CS"/>
</dbReference>
<dbReference type="InterPro" id="IPR013839">
    <property type="entry name" value="DNAligase_adenylation"/>
</dbReference>
<dbReference type="InterPro" id="IPR013840">
    <property type="entry name" value="DNAligase_N"/>
</dbReference>
<dbReference type="InterPro" id="IPR003583">
    <property type="entry name" value="Hlx-hairpin-Hlx_DNA-bd_motif"/>
</dbReference>
<dbReference type="InterPro" id="IPR012340">
    <property type="entry name" value="NA-bd_OB-fold"/>
</dbReference>
<dbReference type="InterPro" id="IPR004150">
    <property type="entry name" value="NAD_DNA_ligase_OB"/>
</dbReference>
<dbReference type="InterPro" id="IPR010994">
    <property type="entry name" value="RuvA_2-like"/>
</dbReference>
<dbReference type="InterPro" id="IPR004149">
    <property type="entry name" value="Znf_DNAligase_C4"/>
</dbReference>
<dbReference type="NCBIfam" id="TIGR00575">
    <property type="entry name" value="dnlj"/>
    <property type="match status" value="1"/>
</dbReference>
<dbReference type="NCBIfam" id="NF005932">
    <property type="entry name" value="PRK07956.1"/>
    <property type="match status" value="1"/>
</dbReference>
<dbReference type="PANTHER" id="PTHR23389">
    <property type="entry name" value="CHROMOSOME TRANSMISSION FIDELITY FACTOR 18"/>
    <property type="match status" value="1"/>
</dbReference>
<dbReference type="PANTHER" id="PTHR23389:SF9">
    <property type="entry name" value="DNA LIGASE"/>
    <property type="match status" value="1"/>
</dbReference>
<dbReference type="Pfam" id="PF00533">
    <property type="entry name" value="BRCT"/>
    <property type="match status" value="1"/>
</dbReference>
<dbReference type="Pfam" id="PF01653">
    <property type="entry name" value="DNA_ligase_aden"/>
    <property type="match status" value="1"/>
</dbReference>
<dbReference type="Pfam" id="PF03120">
    <property type="entry name" value="DNA_ligase_OB"/>
    <property type="match status" value="1"/>
</dbReference>
<dbReference type="Pfam" id="PF03119">
    <property type="entry name" value="DNA_ligase_ZBD"/>
    <property type="match status" value="1"/>
</dbReference>
<dbReference type="Pfam" id="PF12826">
    <property type="entry name" value="HHH_2"/>
    <property type="match status" value="1"/>
</dbReference>
<dbReference type="PIRSF" id="PIRSF001604">
    <property type="entry name" value="LigA"/>
    <property type="match status" value="1"/>
</dbReference>
<dbReference type="SMART" id="SM00292">
    <property type="entry name" value="BRCT"/>
    <property type="match status" value="1"/>
</dbReference>
<dbReference type="SMART" id="SM00278">
    <property type="entry name" value="HhH1"/>
    <property type="match status" value="3"/>
</dbReference>
<dbReference type="SMART" id="SM00532">
    <property type="entry name" value="LIGANc"/>
    <property type="match status" value="1"/>
</dbReference>
<dbReference type="SUPFAM" id="SSF52113">
    <property type="entry name" value="BRCT domain"/>
    <property type="match status" value="1"/>
</dbReference>
<dbReference type="SUPFAM" id="SSF56091">
    <property type="entry name" value="DNA ligase/mRNA capping enzyme, catalytic domain"/>
    <property type="match status" value="1"/>
</dbReference>
<dbReference type="SUPFAM" id="SSF50249">
    <property type="entry name" value="Nucleic acid-binding proteins"/>
    <property type="match status" value="1"/>
</dbReference>
<dbReference type="SUPFAM" id="SSF47781">
    <property type="entry name" value="RuvA domain 2-like"/>
    <property type="match status" value="1"/>
</dbReference>
<dbReference type="PROSITE" id="PS50172">
    <property type="entry name" value="BRCT"/>
    <property type="match status" value="1"/>
</dbReference>
<dbReference type="PROSITE" id="PS01055">
    <property type="entry name" value="DNA_LIGASE_N1"/>
    <property type="match status" value="1"/>
</dbReference>
<dbReference type="PROSITE" id="PS01056">
    <property type="entry name" value="DNA_LIGASE_N2"/>
    <property type="match status" value="1"/>
</dbReference>
<proteinExistence type="inferred from homology"/>